<sequence length="360" mass="40517">MKPSIVAKLEALHERHEEVQALLGDAQTIADQERFRALSREYAQLSDVSRCFTDWQQVQEDIETAQMMLDDPEMREMAQDELREAKEKSEQLEQQLQVLLLPKDPDDERNAFLEVRAGTGGDEAALFAGDLFRMYSRYAEARRWRVEIMSASEGEHGGYKEIIAKISGDGVYGRLKFESGGHRVQRVPATESQGRIHTSACTVAVMPELPDAELPDINPADLRIDTFRSSGAGGQHVNTTDSAIRITHLPTGIVVECQDERSQHKNKAKALSVLGARIHAAEMAKRQQAEASTRRNLLGSGDRSDRNRTYNFPQGRVTDHRINLTLYRLDEVMEGKLDMLIEPIIQEHQADQLAALSEQE</sequence>
<comment type="function">
    <text evidence="1">Peptide chain release factor 1 directs the termination of translation in response to the peptide chain termination codons UAG and UAA.</text>
</comment>
<comment type="subcellular location">
    <subcellularLocation>
        <location evidence="1">Cytoplasm</location>
    </subcellularLocation>
</comment>
<comment type="PTM">
    <text evidence="1">Methylated by PrmC. Methylation increases the termination efficiency of RF1.</text>
</comment>
<comment type="similarity">
    <text evidence="1">Belongs to the prokaryotic/mitochondrial release factor family.</text>
</comment>
<gene>
    <name evidence="1" type="primary">prfA</name>
    <name type="ordered locus">Ecok1_11340</name>
    <name type="ORF">APECO1_328</name>
</gene>
<evidence type="ECO:0000255" key="1">
    <source>
        <dbReference type="HAMAP-Rule" id="MF_00093"/>
    </source>
</evidence>
<evidence type="ECO:0000256" key="2">
    <source>
        <dbReference type="SAM" id="MobiDB-lite"/>
    </source>
</evidence>
<proteinExistence type="inferred from homology"/>
<reference key="1">
    <citation type="journal article" date="2007" name="J. Bacteriol.">
        <title>The genome sequence of avian pathogenic Escherichia coli strain O1:K1:H7 shares strong similarities with human extraintestinal pathogenic E. coli genomes.</title>
        <authorList>
            <person name="Johnson T.J."/>
            <person name="Kariyawasam S."/>
            <person name="Wannemuehler Y."/>
            <person name="Mangiamele P."/>
            <person name="Johnson S.J."/>
            <person name="Doetkott C."/>
            <person name="Skyberg J.A."/>
            <person name="Lynne A.M."/>
            <person name="Johnson J.R."/>
            <person name="Nolan L.K."/>
        </authorList>
    </citation>
    <scope>NUCLEOTIDE SEQUENCE [LARGE SCALE GENOMIC DNA]</scope>
</reference>
<dbReference type="EMBL" id="CP000468">
    <property type="protein sequence ID" value="ABJ00628.1"/>
    <property type="molecule type" value="Genomic_DNA"/>
</dbReference>
<dbReference type="RefSeq" id="WP_000804726.1">
    <property type="nucleotide sequence ID" value="NZ_CADILS010000001.1"/>
</dbReference>
<dbReference type="SMR" id="A1AAD8"/>
<dbReference type="GeneID" id="93775276"/>
<dbReference type="KEGG" id="ecv:APECO1_328"/>
<dbReference type="HOGENOM" id="CLU_036856_0_1_6"/>
<dbReference type="Proteomes" id="UP000008216">
    <property type="component" value="Chromosome"/>
</dbReference>
<dbReference type="GO" id="GO:0005737">
    <property type="term" value="C:cytoplasm"/>
    <property type="evidence" value="ECO:0007669"/>
    <property type="project" value="UniProtKB-SubCell"/>
</dbReference>
<dbReference type="GO" id="GO:0016149">
    <property type="term" value="F:translation release factor activity, codon specific"/>
    <property type="evidence" value="ECO:0007669"/>
    <property type="project" value="UniProtKB-UniRule"/>
</dbReference>
<dbReference type="FunFam" id="3.30.160.20:FF:000004">
    <property type="entry name" value="Peptide chain release factor 1"/>
    <property type="match status" value="1"/>
</dbReference>
<dbReference type="FunFam" id="3.30.70.1660:FF:000002">
    <property type="entry name" value="Peptide chain release factor 1"/>
    <property type="match status" value="1"/>
</dbReference>
<dbReference type="FunFam" id="3.30.70.1660:FF:000004">
    <property type="entry name" value="Peptide chain release factor 1"/>
    <property type="match status" value="1"/>
</dbReference>
<dbReference type="Gene3D" id="3.30.160.20">
    <property type="match status" value="1"/>
</dbReference>
<dbReference type="Gene3D" id="3.30.70.1660">
    <property type="match status" value="1"/>
</dbReference>
<dbReference type="Gene3D" id="6.10.140.1950">
    <property type="match status" value="1"/>
</dbReference>
<dbReference type="HAMAP" id="MF_00093">
    <property type="entry name" value="Rel_fac_1"/>
    <property type="match status" value="1"/>
</dbReference>
<dbReference type="InterPro" id="IPR005139">
    <property type="entry name" value="PCRF"/>
</dbReference>
<dbReference type="InterPro" id="IPR000352">
    <property type="entry name" value="Pep_chain_release_fac_I"/>
</dbReference>
<dbReference type="InterPro" id="IPR045853">
    <property type="entry name" value="Pep_chain_release_fac_I_sf"/>
</dbReference>
<dbReference type="InterPro" id="IPR050057">
    <property type="entry name" value="Prokaryotic/Mito_RF"/>
</dbReference>
<dbReference type="InterPro" id="IPR004373">
    <property type="entry name" value="RF-1"/>
</dbReference>
<dbReference type="NCBIfam" id="TIGR00019">
    <property type="entry name" value="prfA"/>
    <property type="match status" value="1"/>
</dbReference>
<dbReference type="NCBIfam" id="NF001859">
    <property type="entry name" value="PRK00591.1"/>
    <property type="match status" value="1"/>
</dbReference>
<dbReference type="PANTHER" id="PTHR43804">
    <property type="entry name" value="LD18447P"/>
    <property type="match status" value="1"/>
</dbReference>
<dbReference type="PANTHER" id="PTHR43804:SF7">
    <property type="entry name" value="LD18447P"/>
    <property type="match status" value="1"/>
</dbReference>
<dbReference type="Pfam" id="PF03462">
    <property type="entry name" value="PCRF"/>
    <property type="match status" value="1"/>
</dbReference>
<dbReference type="Pfam" id="PF00472">
    <property type="entry name" value="RF-1"/>
    <property type="match status" value="1"/>
</dbReference>
<dbReference type="SMART" id="SM00937">
    <property type="entry name" value="PCRF"/>
    <property type="match status" value="1"/>
</dbReference>
<dbReference type="SUPFAM" id="SSF75620">
    <property type="entry name" value="Release factor"/>
    <property type="match status" value="1"/>
</dbReference>
<dbReference type="PROSITE" id="PS00745">
    <property type="entry name" value="RF_PROK_I"/>
    <property type="match status" value="1"/>
</dbReference>
<name>RF1_ECOK1</name>
<protein>
    <recommendedName>
        <fullName evidence="1">Peptide chain release factor 1</fullName>
        <shortName evidence="1">RF-1</shortName>
    </recommendedName>
</protein>
<organism>
    <name type="scientific">Escherichia coli O1:K1 / APEC</name>
    <dbReference type="NCBI Taxonomy" id="405955"/>
    <lineage>
        <taxon>Bacteria</taxon>
        <taxon>Pseudomonadati</taxon>
        <taxon>Pseudomonadota</taxon>
        <taxon>Gammaproteobacteria</taxon>
        <taxon>Enterobacterales</taxon>
        <taxon>Enterobacteriaceae</taxon>
        <taxon>Escherichia</taxon>
    </lineage>
</organism>
<accession>A1AAD8</accession>
<keyword id="KW-0963">Cytoplasm</keyword>
<keyword id="KW-0488">Methylation</keyword>
<keyword id="KW-0648">Protein biosynthesis</keyword>
<keyword id="KW-1185">Reference proteome</keyword>
<feature type="chain" id="PRO_1000004887" description="Peptide chain release factor 1">
    <location>
        <begin position="1"/>
        <end position="360"/>
    </location>
</feature>
<feature type="region of interest" description="Disordered" evidence="2">
    <location>
        <begin position="284"/>
        <end position="313"/>
    </location>
</feature>
<feature type="modified residue" description="N5-methylglutamine" evidence="1">
    <location>
        <position position="235"/>
    </location>
</feature>